<sequence>MPRQEHIRNFSIIAHIDHGKSTLADRILEVTGLVSDREKRDQYLDRMELERERGITIKAQSVRIPYTAKDGRKYVLNLIDTPGHVDFNYEVSRSLAACEGALLVVDASQGVEAQTLANVYLALDHNLEVIPVLNKVDLPSADADRVKHEIEESIGLDCSDAVAVSAKTGLNVDKVLEAIVERLPAPEGNLNAPLKALIFDSWYDSYQGVVVLFRIVDGVLRKGDRIKLFATERSYEVIRLGVFSPEIVDMTELGAGEVGFLCANIKELGDAKVGDTITHVDRPAEVPVEGFKEVQPMVFCGLYPTDSADYEQLKYALEKLQLNDAAFSYEPETSQALGFGYRCGFLGLLHMEIIQERLEREFQVELIATAPSVIYKIDTVDGKKSDIDNPSKLPDPTKIAALYEPYVRMDIHVPNDYVGNVLKLCEEKRGIQKNMGYIASNRVVITYELPFAEIVFDFFDRLKSGTKGYASMDYEFIDYRQSALVKLDILINGEAVDALAVIVHRDKAYHYGRALALKLKRTIPRQMFEVAIQAAIGQKIIARESISALRKNVTAKCYGGDITRKRKLLEKQKEGKKRMKRMGNVELPQEAFLAALQVGDE</sequence>
<evidence type="ECO:0000255" key="1">
    <source>
        <dbReference type="HAMAP-Rule" id="MF_00071"/>
    </source>
</evidence>
<name>LEPA_NITV9</name>
<gene>
    <name evidence="1" type="primary">lepA</name>
    <name type="ordered locus">DvMF_2717</name>
</gene>
<keyword id="KW-0997">Cell inner membrane</keyword>
<keyword id="KW-1003">Cell membrane</keyword>
<keyword id="KW-0342">GTP-binding</keyword>
<keyword id="KW-0378">Hydrolase</keyword>
<keyword id="KW-0472">Membrane</keyword>
<keyword id="KW-0547">Nucleotide-binding</keyword>
<keyword id="KW-0648">Protein biosynthesis</keyword>
<dbReference type="EC" id="3.6.5.n1" evidence="1"/>
<dbReference type="EMBL" id="CP001197">
    <property type="protein sequence ID" value="ACL09656.1"/>
    <property type="molecule type" value="Genomic_DNA"/>
</dbReference>
<dbReference type="SMR" id="B8DIZ5"/>
<dbReference type="STRING" id="883.DvMF_2717"/>
<dbReference type="KEGG" id="dvm:DvMF_2717"/>
<dbReference type="eggNOG" id="COG0481">
    <property type="taxonomic scope" value="Bacteria"/>
</dbReference>
<dbReference type="HOGENOM" id="CLU_009995_3_3_7"/>
<dbReference type="OrthoDB" id="9801472at2"/>
<dbReference type="GO" id="GO:0005886">
    <property type="term" value="C:plasma membrane"/>
    <property type="evidence" value="ECO:0007669"/>
    <property type="project" value="UniProtKB-SubCell"/>
</dbReference>
<dbReference type="GO" id="GO:0005525">
    <property type="term" value="F:GTP binding"/>
    <property type="evidence" value="ECO:0007669"/>
    <property type="project" value="UniProtKB-UniRule"/>
</dbReference>
<dbReference type="GO" id="GO:0003924">
    <property type="term" value="F:GTPase activity"/>
    <property type="evidence" value="ECO:0007669"/>
    <property type="project" value="UniProtKB-UniRule"/>
</dbReference>
<dbReference type="GO" id="GO:0043022">
    <property type="term" value="F:ribosome binding"/>
    <property type="evidence" value="ECO:0007669"/>
    <property type="project" value="UniProtKB-UniRule"/>
</dbReference>
<dbReference type="GO" id="GO:0003746">
    <property type="term" value="F:translation elongation factor activity"/>
    <property type="evidence" value="ECO:0007669"/>
    <property type="project" value="UniProtKB-UniRule"/>
</dbReference>
<dbReference type="GO" id="GO:0045727">
    <property type="term" value="P:positive regulation of translation"/>
    <property type="evidence" value="ECO:0007669"/>
    <property type="project" value="UniProtKB-UniRule"/>
</dbReference>
<dbReference type="CDD" id="cd03699">
    <property type="entry name" value="EF4_II"/>
    <property type="match status" value="1"/>
</dbReference>
<dbReference type="CDD" id="cd16260">
    <property type="entry name" value="EF4_III"/>
    <property type="match status" value="1"/>
</dbReference>
<dbReference type="CDD" id="cd01890">
    <property type="entry name" value="LepA"/>
    <property type="match status" value="1"/>
</dbReference>
<dbReference type="CDD" id="cd03709">
    <property type="entry name" value="lepA_C"/>
    <property type="match status" value="1"/>
</dbReference>
<dbReference type="FunFam" id="3.40.50.300:FF:000078">
    <property type="entry name" value="Elongation factor 4"/>
    <property type="match status" value="1"/>
</dbReference>
<dbReference type="FunFam" id="2.40.30.10:FF:000015">
    <property type="entry name" value="Translation factor GUF1, mitochondrial"/>
    <property type="match status" value="1"/>
</dbReference>
<dbReference type="FunFam" id="3.30.70.240:FF:000007">
    <property type="entry name" value="Translation factor GUF1, mitochondrial"/>
    <property type="match status" value="1"/>
</dbReference>
<dbReference type="FunFam" id="3.30.70.2570:FF:000001">
    <property type="entry name" value="Translation factor GUF1, mitochondrial"/>
    <property type="match status" value="1"/>
</dbReference>
<dbReference type="FunFam" id="3.30.70.870:FF:000004">
    <property type="entry name" value="Translation factor GUF1, mitochondrial"/>
    <property type="match status" value="1"/>
</dbReference>
<dbReference type="Gene3D" id="3.30.70.240">
    <property type="match status" value="1"/>
</dbReference>
<dbReference type="Gene3D" id="3.30.70.2570">
    <property type="entry name" value="Elongation factor 4, C-terminal domain"/>
    <property type="match status" value="1"/>
</dbReference>
<dbReference type="Gene3D" id="3.30.70.870">
    <property type="entry name" value="Elongation Factor G (Translational Gtpase), domain 3"/>
    <property type="match status" value="1"/>
</dbReference>
<dbReference type="Gene3D" id="3.40.50.300">
    <property type="entry name" value="P-loop containing nucleotide triphosphate hydrolases"/>
    <property type="match status" value="1"/>
</dbReference>
<dbReference type="Gene3D" id="2.40.30.10">
    <property type="entry name" value="Translation factors"/>
    <property type="match status" value="1"/>
</dbReference>
<dbReference type="HAMAP" id="MF_00071">
    <property type="entry name" value="LepA"/>
    <property type="match status" value="1"/>
</dbReference>
<dbReference type="InterPro" id="IPR006297">
    <property type="entry name" value="EF-4"/>
</dbReference>
<dbReference type="InterPro" id="IPR041095">
    <property type="entry name" value="EFG_II"/>
</dbReference>
<dbReference type="InterPro" id="IPR035647">
    <property type="entry name" value="EFG_III/V"/>
</dbReference>
<dbReference type="InterPro" id="IPR000640">
    <property type="entry name" value="EFG_V-like"/>
</dbReference>
<dbReference type="InterPro" id="IPR004161">
    <property type="entry name" value="EFTu-like_2"/>
</dbReference>
<dbReference type="InterPro" id="IPR031157">
    <property type="entry name" value="G_TR_CS"/>
</dbReference>
<dbReference type="InterPro" id="IPR038363">
    <property type="entry name" value="LepA_C_sf"/>
</dbReference>
<dbReference type="InterPro" id="IPR013842">
    <property type="entry name" value="LepA_CTD"/>
</dbReference>
<dbReference type="InterPro" id="IPR035654">
    <property type="entry name" value="LepA_IV"/>
</dbReference>
<dbReference type="InterPro" id="IPR027417">
    <property type="entry name" value="P-loop_NTPase"/>
</dbReference>
<dbReference type="InterPro" id="IPR005225">
    <property type="entry name" value="Small_GTP-bd"/>
</dbReference>
<dbReference type="InterPro" id="IPR000795">
    <property type="entry name" value="T_Tr_GTP-bd_dom"/>
</dbReference>
<dbReference type="NCBIfam" id="TIGR01393">
    <property type="entry name" value="lepA"/>
    <property type="match status" value="1"/>
</dbReference>
<dbReference type="NCBIfam" id="TIGR00231">
    <property type="entry name" value="small_GTP"/>
    <property type="match status" value="1"/>
</dbReference>
<dbReference type="PANTHER" id="PTHR43512:SF4">
    <property type="entry name" value="TRANSLATION FACTOR GUF1 HOMOLOG, CHLOROPLASTIC"/>
    <property type="match status" value="1"/>
</dbReference>
<dbReference type="PANTHER" id="PTHR43512">
    <property type="entry name" value="TRANSLATION FACTOR GUF1-RELATED"/>
    <property type="match status" value="1"/>
</dbReference>
<dbReference type="Pfam" id="PF00679">
    <property type="entry name" value="EFG_C"/>
    <property type="match status" value="1"/>
</dbReference>
<dbReference type="Pfam" id="PF14492">
    <property type="entry name" value="EFG_III"/>
    <property type="match status" value="1"/>
</dbReference>
<dbReference type="Pfam" id="PF00009">
    <property type="entry name" value="GTP_EFTU"/>
    <property type="match status" value="1"/>
</dbReference>
<dbReference type="Pfam" id="PF03144">
    <property type="entry name" value="GTP_EFTU_D2"/>
    <property type="match status" value="1"/>
</dbReference>
<dbReference type="Pfam" id="PF06421">
    <property type="entry name" value="LepA_C"/>
    <property type="match status" value="1"/>
</dbReference>
<dbReference type="PRINTS" id="PR00315">
    <property type="entry name" value="ELONGATNFCT"/>
</dbReference>
<dbReference type="SMART" id="SM00838">
    <property type="entry name" value="EFG_C"/>
    <property type="match status" value="1"/>
</dbReference>
<dbReference type="SUPFAM" id="SSF54980">
    <property type="entry name" value="EF-G C-terminal domain-like"/>
    <property type="match status" value="2"/>
</dbReference>
<dbReference type="SUPFAM" id="SSF52540">
    <property type="entry name" value="P-loop containing nucleoside triphosphate hydrolases"/>
    <property type="match status" value="1"/>
</dbReference>
<dbReference type="PROSITE" id="PS00301">
    <property type="entry name" value="G_TR_1"/>
    <property type="match status" value="1"/>
</dbReference>
<dbReference type="PROSITE" id="PS51722">
    <property type="entry name" value="G_TR_2"/>
    <property type="match status" value="1"/>
</dbReference>
<comment type="function">
    <text evidence="1">Required for accurate and efficient protein synthesis under certain stress conditions. May act as a fidelity factor of the translation reaction, by catalyzing a one-codon backward translocation of tRNAs on improperly translocated ribosomes. Back-translocation proceeds from a post-translocation (POST) complex to a pre-translocation (PRE) complex, thus giving elongation factor G a second chance to translocate the tRNAs correctly. Binds to ribosomes in a GTP-dependent manner.</text>
</comment>
<comment type="catalytic activity">
    <reaction evidence="1">
        <text>GTP + H2O = GDP + phosphate + H(+)</text>
        <dbReference type="Rhea" id="RHEA:19669"/>
        <dbReference type="ChEBI" id="CHEBI:15377"/>
        <dbReference type="ChEBI" id="CHEBI:15378"/>
        <dbReference type="ChEBI" id="CHEBI:37565"/>
        <dbReference type="ChEBI" id="CHEBI:43474"/>
        <dbReference type="ChEBI" id="CHEBI:58189"/>
        <dbReference type="EC" id="3.6.5.n1"/>
    </reaction>
</comment>
<comment type="subcellular location">
    <subcellularLocation>
        <location evidence="1">Cell inner membrane</location>
        <topology evidence="1">Peripheral membrane protein</topology>
        <orientation evidence="1">Cytoplasmic side</orientation>
    </subcellularLocation>
</comment>
<comment type="similarity">
    <text evidence="1">Belongs to the TRAFAC class translation factor GTPase superfamily. Classic translation factor GTPase family. LepA subfamily.</text>
</comment>
<organism>
    <name type="scientific">Nitratidesulfovibrio vulgaris (strain DSM 19637 / Miyazaki F)</name>
    <name type="common">Desulfovibrio vulgaris</name>
    <dbReference type="NCBI Taxonomy" id="883"/>
    <lineage>
        <taxon>Bacteria</taxon>
        <taxon>Pseudomonadati</taxon>
        <taxon>Thermodesulfobacteriota</taxon>
        <taxon>Desulfovibrionia</taxon>
        <taxon>Desulfovibrionales</taxon>
        <taxon>Desulfovibrionaceae</taxon>
        <taxon>Nitratidesulfovibrio</taxon>
    </lineage>
</organism>
<reference key="1">
    <citation type="submission" date="2008-10" db="EMBL/GenBank/DDBJ databases">
        <title>Complete sequence of Desulfovibrio vulgaris str. 'Miyazaki F'.</title>
        <authorList>
            <person name="Lucas S."/>
            <person name="Copeland A."/>
            <person name="Lapidus A."/>
            <person name="Glavina del Rio T."/>
            <person name="Dalin E."/>
            <person name="Tice H."/>
            <person name="Bruce D."/>
            <person name="Goodwin L."/>
            <person name="Pitluck S."/>
            <person name="Sims D."/>
            <person name="Brettin T."/>
            <person name="Detter J.C."/>
            <person name="Han C."/>
            <person name="Larimer F."/>
            <person name="Land M."/>
            <person name="Hauser L."/>
            <person name="Kyrpides N."/>
            <person name="Mikhailova N."/>
            <person name="Hazen T.C."/>
            <person name="Richardson P."/>
        </authorList>
    </citation>
    <scope>NUCLEOTIDE SEQUENCE [LARGE SCALE GENOMIC DNA]</scope>
    <source>
        <strain>DSM 19637 / Miyazaki F</strain>
    </source>
</reference>
<accession>B8DIZ5</accession>
<proteinExistence type="inferred from homology"/>
<feature type="chain" id="PRO_1000117020" description="Elongation factor 4">
    <location>
        <begin position="1"/>
        <end position="601"/>
    </location>
</feature>
<feature type="domain" description="tr-type G">
    <location>
        <begin position="5"/>
        <end position="187"/>
    </location>
</feature>
<feature type="binding site" evidence="1">
    <location>
        <begin position="17"/>
        <end position="22"/>
    </location>
    <ligand>
        <name>GTP</name>
        <dbReference type="ChEBI" id="CHEBI:37565"/>
    </ligand>
</feature>
<feature type="binding site" evidence="1">
    <location>
        <begin position="134"/>
        <end position="137"/>
    </location>
    <ligand>
        <name>GTP</name>
        <dbReference type="ChEBI" id="CHEBI:37565"/>
    </ligand>
</feature>
<protein>
    <recommendedName>
        <fullName evidence="1">Elongation factor 4</fullName>
        <shortName evidence="1">EF-4</shortName>
        <ecNumber evidence="1">3.6.5.n1</ecNumber>
    </recommendedName>
    <alternativeName>
        <fullName evidence="1">Ribosomal back-translocase LepA</fullName>
    </alternativeName>
</protein>